<reference key="1">
    <citation type="submission" date="2007-10" db="EMBL/GenBank/DDBJ databases">
        <title>Complete genome of Alkaliphilus oremlandii OhILAs.</title>
        <authorList>
            <person name="Copeland A."/>
            <person name="Lucas S."/>
            <person name="Lapidus A."/>
            <person name="Barry K."/>
            <person name="Detter J.C."/>
            <person name="Glavina del Rio T."/>
            <person name="Hammon N."/>
            <person name="Israni S."/>
            <person name="Dalin E."/>
            <person name="Tice H."/>
            <person name="Pitluck S."/>
            <person name="Chain P."/>
            <person name="Malfatti S."/>
            <person name="Shin M."/>
            <person name="Vergez L."/>
            <person name="Schmutz J."/>
            <person name="Larimer F."/>
            <person name="Land M."/>
            <person name="Hauser L."/>
            <person name="Kyrpides N."/>
            <person name="Mikhailova N."/>
            <person name="Stolz J.F."/>
            <person name="Dawson A."/>
            <person name="Fisher E."/>
            <person name="Crable B."/>
            <person name="Perera E."/>
            <person name="Lisak J."/>
            <person name="Ranganathan M."/>
            <person name="Basu P."/>
            <person name="Richardson P."/>
        </authorList>
    </citation>
    <scope>NUCLEOTIDE SEQUENCE [LARGE SCALE GENOMIC DNA]</scope>
    <source>
        <strain>OhILAs</strain>
    </source>
</reference>
<name>AROA_ALKOO</name>
<keyword id="KW-0028">Amino-acid biosynthesis</keyword>
<keyword id="KW-0057">Aromatic amino acid biosynthesis</keyword>
<keyword id="KW-0963">Cytoplasm</keyword>
<keyword id="KW-1185">Reference proteome</keyword>
<keyword id="KW-0808">Transferase</keyword>
<protein>
    <recommendedName>
        <fullName evidence="1">3-phosphoshikimate 1-carboxyvinyltransferase</fullName>
        <ecNumber evidence="1">2.5.1.19</ecNumber>
    </recommendedName>
    <alternativeName>
        <fullName evidence="1">5-enolpyruvylshikimate-3-phosphate synthase</fullName>
        <shortName evidence="1">EPSP synthase</shortName>
        <shortName evidence="1">EPSPS</shortName>
    </alternativeName>
</protein>
<sequence>MDFVVNKIEAISGSVKVPGDKSISHRSIILGSISKGTTYVRDILLSEDVQRTIGFFKKLGVSIEQKNKVIALKGMAIEDFRPYTQELDMGNSGTSARLLLGLISGSPHAYVLNGDPFLKKRPMKRVTKPLEQMGAHIEYLEREDLLPIKIKGGNLRGIHYKLPVASAQIKSALILAGLHCSGKTVIEEPVATRDHTEIMIQHFGGTVEKNNHFIQIKGNQRLLANEVLVPGDISSAAFLLVLSAIVPKAELMIEDVGLNPTRSGILHVLESMGARMEILEERVVNGERVGNILIRHSCLKAVTIEGDIIPTLIDEIPILAVAATQAEGITVIRDAQELKVKESNRIDTVVSQLKKMGANIEASHDGMIIQGPTKLKGATIDSEFDHRIAMAFAVAGMVAEGETKILKSECIAVSFPEFTEILKKISK</sequence>
<dbReference type="EC" id="2.5.1.19" evidence="1"/>
<dbReference type="EMBL" id="CP000853">
    <property type="protein sequence ID" value="ABW18903.1"/>
    <property type="molecule type" value="Genomic_DNA"/>
</dbReference>
<dbReference type="RefSeq" id="WP_012159215.1">
    <property type="nucleotide sequence ID" value="NC_009922.1"/>
</dbReference>
<dbReference type="SMR" id="A8MH16"/>
<dbReference type="STRING" id="350688.Clos_1359"/>
<dbReference type="KEGG" id="aoe:Clos_1359"/>
<dbReference type="eggNOG" id="COG0128">
    <property type="taxonomic scope" value="Bacteria"/>
</dbReference>
<dbReference type="HOGENOM" id="CLU_024321_0_1_9"/>
<dbReference type="OrthoDB" id="9809920at2"/>
<dbReference type="UniPathway" id="UPA00053">
    <property type="reaction ID" value="UER00089"/>
</dbReference>
<dbReference type="Proteomes" id="UP000000269">
    <property type="component" value="Chromosome"/>
</dbReference>
<dbReference type="GO" id="GO:0005737">
    <property type="term" value="C:cytoplasm"/>
    <property type="evidence" value="ECO:0007669"/>
    <property type="project" value="UniProtKB-SubCell"/>
</dbReference>
<dbReference type="GO" id="GO:0003866">
    <property type="term" value="F:3-phosphoshikimate 1-carboxyvinyltransferase activity"/>
    <property type="evidence" value="ECO:0007669"/>
    <property type="project" value="UniProtKB-UniRule"/>
</dbReference>
<dbReference type="GO" id="GO:0008652">
    <property type="term" value="P:amino acid biosynthetic process"/>
    <property type="evidence" value="ECO:0007669"/>
    <property type="project" value="UniProtKB-KW"/>
</dbReference>
<dbReference type="GO" id="GO:0009073">
    <property type="term" value="P:aromatic amino acid family biosynthetic process"/>
    <property type="evidence" value="ECO:0007669"/>
    <property type="project" value="UniProtKB-KW"/>
</dbReference>
<dbReference type="GO" id="GO:0009423">
    <property type="term" value="P:chorismate biosynthetic process"/>
    <property type="evidence" value="ECO:0007669"/>
    <property type="project" value="UniProtKB-UniRule"/>
</dbReference>
<dbReference type="CDD" id="cd01556">
    <property type="entry name" value="EPSP_synthase"/>
    <property type="match status" value="1"/>
</dbReference>
<dbReference type="FunFam" id="3.65.10.10:FF:000005">
    <property type="entry name" value="3-phosphoshikimate 1-carboxyvinyltransferase"/>
    <property type="match status" value="1"/>
</dbReference>
<dbReference type="FunFam" id="3.65.10.10:FF:000006">
    <property type="entry name" value="3-phosphoshikimate 1-carboxyvinyltransferase"/>
    <property type="match status" value="1"/>
</dbReference>
<dbReference type="Gene3D" id="3.65.10.10">
    <property type="entry name" value="Enolpyruvate transferase domain"/>
    <property type="match status" value="2"/>
</dbReference>
<dbReference type="HAMAP" id="MF_00210">
    <property type="entry name" value="EPSP_synth"/>
    <property type="match status" value="1"/>
</dbReference>
<dbReference type="InterPro" id="IPR001986">
    <property type="entry name" value="Enolpyruvate_Tfrase_dom"/>
</dbReference>
<dbReference type="InterPro" id="IPR036968">
    <property type="entry name" value="Enolpyruvate_Tfrase_sf"/>
</dbReference>
<dbReference type="InterPro" id="IPR006264">
    <property type="entry name" value="EPSP_synthase"/>
</dbReference>
<dbReference type="InterPro" id="IPR023193">
    <property type="entry name" value="EPSP_synthase_CS"/>
</dbReference>
<dbReference type="InterPro" id="IPR013792">
    <property type="entry name" value="RNA3'P_cycl/enolpyr_Trfase_a/b"/>
</dbReference>
<dbReference type="NCBIfam" id="TIGR01356">
    <property type="entry name" value="aroA"/>
    <property type="match status" value="1"/>
</dbReference>
<dbReference type="PANTHER" id="PTHR21090">
    <property type="entry name" value="AROM/DEHYDROQUINATE SYNTHASE"/>
    <property type="match status" value="1"/>
</dbReference>
<dbReference type="PANTHER" id="PTHR21090:SF5">
    <property type="entry name" value="PENTAFUNCTIONAL AROM POLYPEPTIDE"/>
    <property type="match status" value="1"/>
</dbReference>
<dbReference type="Pfam" id="PF00275">
    <property type="entry name" value="EPSP_synthase"/>
    <property type="match status" value="1"/>
</dbReference>
<dbReference type="PIRSF" id="PIRSF000505">
    <property type="entry name" value="EPSPS"/>
    <property type="match status" value="1"/>
</dbReference>
<dbReference type="SUPFAM" id="SSF55205">
    <property type="entry name" value="EPT/RTPC-like"/>
    <property type="match status" value="1"/>
</dbReference>
<dbReference type="PROSITE" id="PS00104">
    <property type="entry name" value="EPSP_SYNTHASE_1"/>
    <property type="match status" value="1"/>
</dbReference>
<dbReference type="PROSITE" id="PS00885">
    <property type="entry name" value="EPSP_SYNTHASE_2"/>
    <property type="match status" value="1"/>
</dbReference>
<accession>A8MH16</accession>
<comment type="function">
    <text evidence="1">Catalyzes the transfer of the enolpyruvyl moiety of phosphoenolpyruvate (PEP) to the 5-hydroxyl of shikimate-3-phosphate (S3P) to produce enolpyruvyl shikimate-3-phosphate and inorganic phosphate.</text>
</comment>
<comment type="catalytic activity">
    <reaction evidence="1">
        <text>3-phosphoshikimate + phosphoenolpyruvate = 5-O-(1-carboxyvinyl)-3-phosphoshikimate + phosphate</text>
        <dbReference type="Rhea" id="RHEA:21256"/>
        <dbReference type="ChEBI" id="CHEBI:43474"/>
        <dbReference type="ChEBI" id="CHEBI:57701"/>
        <dbReference type="ChEBI" id="CHEBI:58702"/>
        <dbReference type="ChEBI" id="CHEBI:145989"/>
        <dbReference type="EC" id="2.5.1.19"/>
    </reaction>
    <physiologicalReaction direction="left-to-right" evidence="1">
        <dbReference type="Rhea" id="RHEA:21257"/>
    </physiologicalReaction>
</comment>
<comment type="pathway">
    <text evidence="1">Metabolic intermediate biosynthesis; chorismate biosynthesis; chorismate from D-erythrose 4-phosphate and phosphoenolpyruvate: step 6/7.</text>
</comment>
<comment type="subunit">
    <text evidence="1">Monomer.</text>
</comment>
<comment type="subcellular location">
    <subcellularLocation>
        <location evidence="1">Cytoplasm</location>
    </subcellularLocation>
</comment>
<comment type="similarity">
    <text evidence="1">Belongs to the EPSP synthase family.</text>
</comment>
<feature type="chain" id="PRO_1000058593" description="3-phosphoshikimate 1-carboxyvinyltransferase">
    <location>
        <begin position="1"/>
        <end position="427"/>
    </location>
</feature>
<feature type="active site" description="Proton acceptor" evidence="1">
    <location>
        <position position="314"/>
    </location>
</feature>
<feature type="binding site" evidence="1">
    <location>
        <position position="21"/>
    </location>
    <ligand>
        <name>3-phosphoshikimate</name>
        <dbReference type="ChEBI" id="CHEBI:145989"/>
    </ligand>
</feature>
<feature type="binding site" evidence="1">
    <location>
        <position position="21"/>
    </location>
    <ligand>
        <name>phosphoenolpyruvate</name>
        <dbReference type="ChEBI" id="CHEBI:58702"/>
    </ligand>
</feature>
<feature type="binding site" evidence="1">
    <location>
        <position position="22"/>
    </location>
    <ligand>
        <name>3-phosphoshikimate</name>
        <dbReference type="ChEBI" id="CHEBI:145989"/>
    </ligand>
</feature>
<feature type="binding site" evidence="1">
    <location>
        <position position="26"/>
    </location>
    <ligand>
        <name>3-phosphoshikimate</name>
        <dbReference type="ChEBI" id="CHEBI:145989"/>
    </ligand>
</feature>
<feature type="binding site" evidence="1">
    <location>
        <position position="93"/>
    </location>
    <ligand>
        <name>phosphoenolpyruvate</name>
        <dbReference type="ChEBI" id="CHEBI:58702"/>
    </ligand>
</feature>
<feature type="binding site" evidence="1">
    <location>
        <position position="121"/>
    </location>
    <ligand>
        <name>phosphoenolpyruvate</name>
        <dbReference type="ChEBI" id="CHEBI:58702"/>
    </ligand>
</feature>
<feature type="binding site" evidence="1">
    <location>
        <position position="166"/>
    </location>
    <ligand>
        <name>3-phosphoshikimate</name>
        <dbReference type="ChEBI" id="CHEBI:145989"/>
    </ligand>
</feature>
<feature type="binding site" evidence="1">
    <location>
        <position position="168"/>
    </location>
    <ligand>
        <name>3-phosphoshikimate</name>
        <dbReference type="ChEBI" id="CHEBI:145989"/>
    </ligand>
</feature>
<feature type="binding site" evidence="1">
    <location>
        <position position="168"/>
    </location>
    <ligand>
        <name>phosphoenolpyruvate</name>
        <dbReference type="ChEBI" id="CHEBI:58702"/>
    </ligand>
</feature>
<feature type="binding site" evidence="1">
    <location>
        <position position="314"/>
    </location>
    <ligand>
        <name>3-phosphoshikimate</name>
        <dbReference type="ChEBI" id="CHEBI:145989"/>
    </ligand>
</feature>
<feature type="binding site" evidence="1">
    <location>
        <position position="341"/>
    </location>
    <ligand>
        <name>3-phosphoshikimate</name>
        <dbReference type="ChEBI" id="CHEBI:145989"/>
    </ligand>
</feature>
<feature type="binding site" evidence="1">
    <location>
        <position position="345"/>
    </location>
    <ligand>
        <name>phosphoenolpyruvate</name>
        <dbReference type="ChEBI" id="CHEBI:58702"/>
    </ligand>
</feature>
<feature type="binding site" evidence="1">
    <location>
        <position position="387"/>
    </location>
    <ligand>
        <name>phosphoenolpyruvate</name>
        <dbReference type="ChEBI" id="CHEBI:58702"/>
    </ligand>
</feature>
<organism>
    <name type="scientific">Alkaliphilus oremlandii (strain OhILAs)</name>
    <name type="common">Clostridium oremlandii (strain OhILAs)</name>
    <dbReference type="NCBI Taxonomy" id="350688"/>
    <lineage>
        <taxon>Bacteria</taxon>
        <taxon>Bacillati</taxon>
        <taxon>Bacillota</taxon>
        <taxon>Clostridia</taxon>
        <taxon>Peptostreptococcales</taxon>
        <taxon>Natronincolaceae</taxon>
        <taxon>Alkaliphilus</taxon>
    </lineage>
</organism>
<evidence type="ECO:0000255" key="1">
    <source>
        <dbReference type="HAMAP-Rule" id="MF_00210"/>
    </source>
</evidence>
<gene>
    <name evidence="1" type="primary">aroA</name>
    <name type="ordered locus">Clos_1359</name>
</gene>
<proteinExistence type="inferred from homology"/>